<sequence length="167" mass="18695">MSTAKLVKSKATNLLYTRNDVSDSEKKATVELLNRQVIQFIDLSLITKQAHWNMRGANFIAVHEMLDGFRTALIDHLDTMAERAVQLGGVALGTTQVINSKTPLKSYPLDIHNVQDHLKELADRYAIVANDVRKAIGEAKDDDTADILTAASRDLDKFLWFIESNIE</sequence>
<proteinExistence type="inferred from homology"/>
<comment type="function">
    <text evidence="2">During stationary phase, binds the chromosome non-specifically, forming a highly ordered and stable dps-DNA co-crystal within which chromosomal DNA is condensed and protected from diverse damages. It protects DNA from oxidative damage by sequestering intracellular Fe(2+) ion and storing it in the form of Fe(3+) oxyhydroxide mineral, which can be released after reduction. One hydrogen peroxide oxidizes two Fe(2+) ions, which prevents hydroxyl radical production by the Fenton reaction. Dps also protects the cell from UV and gamma irradiation, iron and copper toxicity, thermal stress and acid and base shocks. Also shows a weak catalase activity.</text>
</comment>
<comment type="catalytic activity">
    <reaction evidence="2">
        <text>2 Fe(2+) + H2O2 + 2 H(+) = 2 Fe(3+) + 2 H2O</text>
        <dbReference type="Rhea" id="RHEA:48712"/>
        <dbReference type="ChEBI" id="CHEBI:15377"/>
        <dbReference type="ChEBI" id="CHEBI:15378"/>
        <dbReference type="ChEBI" id="CHEBI:16240"/>
        <dbReference type="ChEBI" id="CHEBI:29033"/>
        <dbReference type="ChEBI" id="CHEBI:29034"/>
    </reaction>
</comment>
<comment type="subunit">
    <text evidence="2">Homododecamer. The 12 subunits form a hollow sphere into which the mineral iron core of up to 500 Fe(3+) can be deposited.</text>
</comment>
<comment type="subcellular location">
    <subcellularLocation>
        <location evidence="2">Cytoplasm</location>
        <location evidence="2">Nucleoid</location>
    </subcellularLocation>
</comment>
<comment type="similarity">
    <text evidence="2">Belongs to the Dps family.</text>
</comment>
<accession>Q32I91</accession>
<name>DPS_SHIDS</name>
<dbReference type="EC" id="1.16.-.-" evidence="2"/>
<dbReference type="EMBL" id="CP000034">
    <property type="protein sequence ID" value="ABB60966.1"/>
    <property type="molecule type" value="Genomic_DNA"/>
</dbReference>
<dbReference type="RefSeq" id="WP_000100800.1">
    <property type="nucleotide sequence ID" value="NC_007606.1"/>
</dbReference>
<dbReference type="RefSeq" id="YP_402455.1">
    <property type="nucleotide sequence ID" value="NC_007606.1"/>
</dbReference>
<dbReference type="SMR" id="Q32I91"/>
<dbReference type="STRING" id="300267.SDY_0783"/>
<dbReference type="EnsemblBacteria" id="ABB60966">
    <property type="protein sequence ID" value="ABB60966"/>
    <property type="gene ID" value="SDY_0783"/>
</dbReference>
<dbReference type="GeneID" id="93776616"/>
<dbReference type="KEGG" id="sdy:SDY_0783"/>
<dbReference type="PATRIC" id="fig|300267.13.peg.902"/>
<dbReference type="HOGENOM" id="CLU_098183_1_2_6"/>
<dbReference type="Proteomes" id="UP000002716">
    <property type="component" value="Chromosome"/>
</dbReference>
<dbReference type="GO" id="GO:0005737">
    <property type="term" value="C:cytoplasm"/>
    <property type="evidence" value="ECO:0007669"/>
    <property type="project" value="UniProtKB-UniRule"/>
</dbReference>
<dbReference type="GO" id="GO:0009295">
    <property type="term" value="C:nucleoid"/>
    <property type="evidence" value="ECO:0007669"/>
    <property type="project" value="UniProtKB-SubCell"/>
</dbReference>
<dbReference type="GO" id="GO:0003677">
    <property type="term" value="F:DNA binding"/>
    <property type="evidence" value="ECO:0007669"/>
    <property type="project" value="UniProtKB-UniRule"/>
</dbReference>
<dbReference type="GO" id="GO:0008199">
    <property type="term" value="F:ferric iron binding"/>
    <property type="evidence" value="ECO:0007669"/>
    <property type="project" value="UniProtKB-UniRule"/>
</dbReference>
<dbReference type="GO" id="GO:0016722">
    <property type="term" value="F:oxidoreductase activity, acting on metal ions"/>
    <property type="evidence" value="ECO:0007669"/>
    <property type="project" value="InterPro"/>
</dbReference>
<dbReference type="GO" id="GO:0030261">
    <property type="term" value="P:chromosome condensation"/>
    <property type="evidence" value="ECO:0007669"/>
    <property type="project" value="UniProtKB-KW"/>
</dbReference>
<dbReference type="GO" id="GO:0006879">
    <property type="term" value="P:intracellular iron ion homeostasis"/>
    <property type="evidence" value="ECO:0007669"/>
    <property type="project" value="UniProtKB-KW"/>
</dbReference>
<dbReference type="CDD" id="cd01043">
    <property type="entry name" value="DPS"/>
    <property type="match status" value="1"/>
</dbReference>
<dbReference type="FunFam" id="1.20.1260.10:FF:000003">
    <property type="entry name" value="DNA protection during starvation protein"/>
    <property type="match status" value="1"/>
</dbReference>
<dbReference type="Gene3D" id="1.20.1260.10">
    <property type="match status" value="1"/>
</dbReference>
<dbReference type="HAMAP" id="MF_01441">
    <property type="entry name" value="Dps"/>
    <property type="match status" value="1"/>
</dbReference>
<dbReference type="InterPro" id="IPR002177">
    <property type="entry name" value="DPS_DNA-bd"/>
</dbReference>
<dbReference type="InterPro" id="IPR023188">
    <property type="entry name" value="DPS_DNA-bd_CS"/>
</dbReference>
<dbReference type="InterPro" id="IPR023067">
    <property type="entry name" value="Dps_gammaproteobac"/>
</dbReference>
<dbReference type="InterPro" id="IPR012347">
    <property type="entry name" value="Ferritin-like"/>
</dbReference>
<dbReference type="InterPro" id="IPR009078">
    <property type="entry name" value="Ferritin-like_SF"/>
</dbReference>
<dbReference type="InterPro" id="IPR008331">
    <property type="entry name" value="Ferritin_DPS_dom"/>
</dbReference>
<dbReference type="NCBIfam" id="NF006975">
    <property type="entry name" value="PRK09448.1"/>
    <property type="match status" value="1"/>
</dbReference>
<dbReference type="PANTHER" id="PTHR42932:SF3">
    <property type="entry name" value="DNA PROTECTION DURING STARVATION PROTEIN"/>
    <property type="match status" value="1"/>
</dbReference>
<dbReference type="PANTHER" id="PTHR42932">
    <property type="entry name" value="GENERAL STRESS PROTEIN 20U"/>
    <property type="match status" value="1"/>
</dbReference>
<dbReference type="Pfam" id="PF00210">
    <property type="entry name" value="Ferritin"/>
    <property type="match status" value="1"/>
</dbReference>
<dbReference type="PIRSF" id="PIRSF005900">
    <property type="entry name" value="Dps"/>
    <property type="match status" value="1"/>
</dbReference>
<dbReference type="PRINTS" id="PR01346">
    <property type="entry name" value="HELNAPAPROT"/>
</dbReference>
<dbReference type="SUPFAM" id="SSF47240">
    <property type="entry name" value="Ferritin-like"/>
    <property type="match status" value="1"/>
</dbReference>
<dbReference type="PROSITE" id="PS00818">
    <property type="entry name" value="DPS_1"/>
    <property type="match status" value="1"/>
</dbReference>
<dbReference type="PROSITE" id="PS00819">
    <property type="entry name" value="DPS_2"/>
    <property type="match status" value="1"/>
</dbReference>
<protein>
    <recommendedName>
        <fullName evidence="2">DNA protection during starvation protein</fullName>
        <ecNumber evidence="2">1.16.-.-</ecNumber>
    </recommendedName>
</protein>
<keyword id="KW-0963">Cytoplasm</keyword>
<keyword id="KW-0226">DNA condensation</keyword>
<keyword id="KW-0238">DNA-binding</keyword>
<keyword id="KW-0408">Iron</keyword>
<keyword id="KW-0409">Iron storage</keyword>
<keyword id="KW-0479">Metal-binding</keyword>
<keyword id="KW-0560">Oxidoreductase</keyword>
<keyword id="KW-1185">Reference proteome</keyword>
<reference key="1">
    <citation type="journal article" date="2005" name="Nucleic Acids Res.">
        <title>Genome dynamics and diversity of Shigella species, the etiologic agents of bacillary dysentery.</title>
        <authorList>
            <person name="Yang F."/>
            <person name="Yang J."/>
            <person name="Zhang X."/>
            <person name="Chen L."/>
            <person name="Jiang Y."/>
            <person name="Yan Y."/>
            <person name="Tang X."/>
            <person name="Wang J."/>
            <person name="Xiong Z."/>
            <person name="Dong J."/>
            <person name="Xue Y."/>
            <person name="Zhu Y."/>
            <person name="Xu X."/>
            <person name="Sun L."/>
            <person name="Chen S."/>
            <person name="Nie H."/>
            <person name="Peng J."/>
            <person name="Xu J."/>
            <person name="Wang Y."/>
            <person name="Yuan Z."/>
            <person name="Wen Y."/>
            <person name="Yao Z."/>
            <person name="Shen Y."/>
            <person name="Qiang B."/>
            <person name="Hou Y."/>
            <person name="Yu J."/>
            <person name="Jin Q."/>
        </authorList>
    </citation>
    <scope>NUCLEOTIDE SEQUENCE [LARGE SCALE GENOMIC DNA]</scope>
    <source>
        <strain>Sd197</strain>
    </source>
</reference>
<organism>
    <name type="scientific">Shigella dysenteriae serotype 1 (strain Sd197)</name>
    <dbReference type="NCBI Taxonomy" id="300267"/>
    <lineage>
        <taxon>Bacteria</taxon>
        <taxon>Pseudomonadati</taxon>
        <taxon>Pseudomonadota</taxon>
        <taxon>Gammaproteobacteria</taxon>
        <taxon>Enterobacterales</taxon>
        <taxon>Enterobacteriaceae</taxon>
        <taxon>Shigella</taxon>
    </lineage>
</organism>
<evidence type="ECO:0000250" key="1"/>
<evidence type="ECO:0000255" key="2">
    <source>
        <dbReference type="HAMAP-Rule" id="MF_01441"/>
    </source>
</evidence>
<feature type="initiator methionine" description="Removed" evidence="1">
    <location>
        <position position="1"/>
    </location>
</feature>
<feature type="chain" id="PRO_0000271595" description="DNA protection during starvation protein">
    <location>
        <begin position="2"/>
        <end position="167"/>
    </location>
</feature>
<feature type="binding site" evidence="2">
    <location>
        <position position="51"/>
    </location>
    <ligand>
        <name>Fe cation</name>
        <dbReference type="ChEBI" id="CHEBI:24875"/>
        <label>1</label>
        <note>ligand shared between two dodecameric partners</note>
    </ligand>
</feature>
<feature type="binding site" description="in other chain" evidence="2">
    <location>
        <position position="78"/>
    </location>
    <ligand>
        <name>Fe cation</name>
        <dbReference type="ChEBI" id="CHEBI:24875"/>
        <label>1</label>
        <note>ligand shared between two dodecameric partners</note>
    </ligand>
</feature>
<feature type="binding site" description="in other chain" evidence="2">
    <location>
        <position position="82"/>
    </location>
    <ligand>
        <name>Fe cation</name>
        <dbReference type="ChEBI" id="CHEBI:24875"/>
        <label>1</label>
        <note>ligand shared between two dodecameric partners</note>
    </ligand>
</feature>
<feature type="binding site" evidence="2">
    <location>
        <position position="82"/>
    </location>
    <ligand>
        <name>Fe cation</name>
        <dbReference type="ChEBI" id="CHEBI:24875"/>
        <label>2</label>
    </ligand>
</feature>
<gene>
    <name evidence="2" type="primary">dps</name>
    <name type="ordered locus">SDY_0783</name>
</gene>